<feature type="chain" id="PRO_0000263217" description="Aspartate/glutamate leucyltransferase">
    <location>
        <begin position="1"/>
        <end position="238"/>
    </location>
</feature>
<accession>Q0HVY7</accession>
<comment type="function">
    <text evidence="1">Functions in the N-end rule pathway of protein degradation where it conjugates Leu from its aminoacyl-tRNA to the N-termini of proteins containing an N-terminal aspartate or glutamate.</text>
</comment>
<comment type="catalytic activity">
    <reaction evidence="1">
        <text>N-terminal L-glutamyl-[protein] + L-leucyl-tRNA(Leu) = N-terminal L-leucyl-L-glutamyl-[protein] + tRNA(Leu) + H(+)</text>
        <dbReference type="Rhea" id="RHEA:50412"/>
        <dbReference type="Rhea" id="RHEA-COMP:9613"/>
        <dbReference type="Rhea" id="RHEA-COMP:9622"/>
        <dbReference type="Rhea" id="RHEA-COMP:12664"/>
        <dbReference type="Rhea" id="RHEA-COMP:12668"/>
        <dbReference type="ChEBI" id="CHEBI:15378"/>
        <dbReference type="ChEBI" id="CHEBI:64721"/>
        <dbReference type="ChEBI" id="CHEBI:78442"/>
        <dbReference type="ChEBI" id="CHEBI:78494"/>
        <dbReference type="ChEBI" id="CHEBI:133041"/>
        <dbReference type="EC" id="2.3.2.29"/>
    </reaction>
</comment>
<comment type="catalytic activity">
    <reaction evidence="1">
        <text>N-terminal L-aspartyl-[protein] + L-leucyl-tRNA(Leu) = N-terminal L-leucyl-L-aspartyl-[protein] + tRNA(Leu) + H(+)</text>
        <dbReference type="Rhea" id="RHEA:50420"/>
        <dbReference type="Rhea" id="RHEA-COMP:9613"/>
        <dbReference type="Rhea" id="RHEA-COMP:9622"/>
        <dbReference type="Rhea" id="RHEA-COMP:12669"/>
        <dbReference type="Rhea" id="RHEA-COMP:12674"/>
        <dbReference type="ChEBI" id="CHEBI:15378"/>
        <dbReference type="ChEBI" id="CHEBI:64720"/>
        <dbReference type="ChEBI" id="CHEBI:78442"/>
        <dbReference type="ChEBI" id="CHEBI:78494"/>
        <dbReference type="ChEBI" id="CHEBI:133042"/>
        <dbReference type="EC" id="2.3.2.29"/>
    </reaction>
</comment>
<comment type="subcellular location">
    <subcellularLocation>
        <location evidence="1">Cytoplasm</location>
    </subcellularLocation>
</comment>
<comment type="similarity">
    <text evidence="1">Belongs to the R-transferase family. Bpt subfamily.</text>
</comment>
<keyword id="KW-0012">Acyltransferase</keyword>
<keyword id="KW-0963">Cytoplasm</keyword>
<keyword id="KW-0808">Transferase</keyword>
<protein>
    <recommendedName>
        <fullName evidence="1">Aspartate/glutamate leucyltransferase</fullName>
        <ecNumber evidence="1">2.3.2.29</ecNumber>
    </recommendedName>
</protein>
<gene>
    <name evidence="1" type="primary">bpt</name>
    <name type="ordered locus">Shewmr7_1725</name>
</gene>
<dbReference type="EC" id="2.3.2.29" evidence="1"/>
<dbReference type="EMBL" id="CP000444">
    <property type="protein sequence ID" value="ABI42718.1"/>
    <property type="molecule type" value="Genomic_DNA"/>
</dbReference>
<dbReference type="SMR" id="Q0HVY7"/>
<dbReference type="KEGG" id="shm:Shewmr7_1725"/>
<dbReference type="HOGENOM" id="CLU_077607_0_0_6"/>
<dbReference type="GO" id="GO:0005737">
    <property type="term" value="C:cytoplasm"/>
    <property type="evidence" value="ECO:0007669"/>
    <property type="project" value="UniProtKB-SubCell"/>
</dbReference>
<dbReference type="GO" id="GO:0004057">
    <property type="term" value="F:arginyl-tRNA--protein transferase activity"/>
    <property type="evidence" value="ECO:0007669"/>
    <property type="project" value="InterPro"/>
</dbReference>
<dbReference type="GO" id="GO:0008914">
    <property type="term" value="F:leucyl-tRNA--protein transferase activity"/>
    <property type="evidence" value="ECO:0007669"/>
    <property type="project" value="UniProtKB-UniRule"/>
</dbReference>
<dbReference type="GO" id="GO:0071596">
    <property type="term" value="P:ubiquitin-dependent protein catabolic process via the N-end rule pathway"/>
    <property type="evidence" value="ECO:0007669"/>
    <property type="project" value="InterPro"/>
</dbReference>
<dbReference type="HAMAP" id="MF_00689">
    <property type="entry name" value="Bpt"/>
    <property type="match status" value="1"/>
</dbReference>
<dbReference type="InterPro" id="IPR016181">
    <property type="entry name" value="Acyl_CoA_acyltransferase"/>
</dbReference>
<dbReference type="InterPro" id="IPR017138">
    <property type="entry name" value="Asp_Glu_LeuTrfase"/>
</dbReference>
<dbReference type="InterPro" id="IPR030700">
    <property type="entry name" value="N-end_Aminoacyl_Trfase"/>
</dbReference>
<dbReference type="InterPro" id="IPR007472">
    <property type="entry name" value="N-end_Aminoacyl_Trfase_C"/>
</dbReference>
<dbReference type="InterPro" id="IPR007471">
    <property type="entry name" value="N-end_Aminoacyl_Trfase_N"/>
</dbReference>
<dbReference type="NCBIfam" id="NF002342">
    <property type="entry name" value="PRK01305.1-3"/>
    <property type="match status" value="1"/>
</dbReference>
<dbReference type="NCBIfam" id="NF002345">
    <property type="entry name" value="PRK01305.2-2"/>
    <property type="match status" value="1"/>
</dbReference>
<dbReference type="NCBIfam" id="NF002346">
    <property type="entry name" value="PRK01305.2-3"/>
    <property type="match status" value="1"/>
</dbReference>
<dbReference type="NCBIfam" id="NF002347">
    <property type="entry name" value="PRK01305.2-4"/>
    <property type="match status" value="1"/>
</dbReference>
<dbReference type="PANTHER" id="PTHR21367">
    <property type="entry name" value="ARGININE-TRNA-PROTEIN TRANSFERASE 1"/>
    <property type="match status" value="1"/>
</dbReference>
<dbReference type="PANTHER" id="PTHR21367:SF1">
    <property type="entry name" value="ARGINYL-TRNA--PROTEIN TRANSFERASE 1"/>
    <property type="match status" value="1"/>
</dbReference>
<dbReference type="Pfam" id="PF04377">
    <property type="entry name" value="ATE_C"/>
    <property type="match status" value="1"/>
</dbReference>
<dbReference type="Pfam" id="PF04376">
    <property type="entry name" value="ATE_N"/>
    <property type="match status" value="1"/>
</dbReference>
<dbReference type="PIRSF" id="PIRSF037208">
    <property type="entry name" value="ATE_pro_prd"/>
    <property type="match status" value="1"/>
</dbReference>
<dbReference type="SUPFAM" id="SSF55729">
    <property type="entry name" value="Acyl-CoA N-acyltransferases (Nat)"/>
    <property type="match status" value="1"/>
</dbReference>
<proteinExistence type="inferred from homology"/>
<evidence type="ECO:0000255" key="1">
    <source>
        <dbReference type="HAMAP-Rule" id="MF_00689"/>
    </source>
</evidence>
<name>BPT_SHESR</name>
<organism>
    <name type="scientific">Shewanella sp. (strain MR-7)</name>
    <dbReference type="NCBI Taxonomy" id="60481"/>
    <lineage>
        <taxon>Bacteria</taxon>
        <taxon>Pseudomonadati</taxon>
        <taxon>Pseudomonadota</taxon>
        <taxon>Gammaproteobacteria</taxon>
        <taxon>Alteromonadales</taxon>
        <taxon>Shewanellaceae</taxon>
        <taxon>Shewanella</taxon>
    </lineage>
</organism>
<reference key="1">
    <citation type="submission" date="2006-08" db="EMBL/GenBank/DDBJ databases">
        <title>Complete sequence of chromosome 1 of Shewanella sp. MR-7.</title>
        <authorList>
            <person name="Copeland A."/>
            <person name="Lucas S."/>
            <person name="Lapidus A."/>
            <person name="Barry K."/>
            <person name="Detter J.C."/>
            <person name="Glavina del Rio T."/>
            <person name="Hammon N."/>
            <person name="Israni S."/>
            <person name="Dalin E."/>
            <person name="Tice H."/>
            <person name="Pitluck S."/>
            <person name="Kiss H."/>
            <person name="Brettin T."/>
            <person name="Bruce D."/>
            <person name="Han C."/>
            <person name="Tapia R."/>
            <person name="Gilna P."/>
            <person name="Schmutz J."/>
            <person name="Larimer F."/>
            <person name="Land M."/>
            <person name="Hauser L."/>
            <person name="Kyrpides N."/>
            <person name="Mikhailova N."/>
            <person name="Nealson K."/>
            <person name="Konstantinidis K."/>
            <person name="Klappenbach J."/>
            <person name="Tiedje J."/>
            <person name="Richardson P."/>
        </authorList>
    </citation>
    <scope>NUCLEOTIDE SEQUENCE [LARGE SCALE GENOMIC DNA]</scope>
    <source>
        <strain>MR-7</strain>
    </source>
</reference>
<sequence>MNSNASNTPIAIGISQIFPCSYLDGQQEQLLVIQEETLDPILFDRLLAIGFRRSGSAIYKPRCPRCSACQPIRLPIKEFTPSKRQKRTLAHNRDLTWRITSEHTEAQYALYEKYIRERHFDGPMFPPSKTQYEQFLFCHWLPPTFIEVYDGNRLLAVAVTDTLSNSLSAIYSYFDPDEERRSLGSLLILLQCRLAKLQDKEFLYLGYQIDANRKMSYKRLYRPYQILTPQGWEYSQVC</sequence>